<proteinExistence type="inferred from homology"/>
<dbReference type="EMBL" id="CP000312">
    <property type="protein sequence ID" value="ABG86399.1"/>
    <property type="molecule type" value="Genomic_DNA"/>
</dbReference>
<dbReference type="RefSeq" id="WP_003479405.1">
    <property type="nucleotide sequence ID" value="NZ_CAXVKH010000018.1"/>
</dbReference>
<dbReference type="SMR" id="Q0SPR6"/>
<dbReference type="GeneID" id="93000743"/>
<dbReference type="KEGG" id="cpr:CPR_2656"/>
<dbReference type="Proteomes" id="UP000001824">
    <property type="component" value="Chromosome"/>
</dbReference>
<dbReference type="GO" id="GO:0005737">
    <property type="term" value="C:cytoplasm"/>
    <property type="evidence" value="ECO:0007669"/>
    <property type="project" value="UniProtKB-ARBA"/>
</dbReference>
<dbReference type="GO" id="GO:1990904">
    <property type="term" value="C:ribonucleoprotein complex"/>
    <property type="evidence" value="ECO:0007669"/>
    <property type="project" value="UniProtKB-KW"/>
</dbReference>
<dbReference type="GO" id="GO:0005840">
    <property type="term" value="C:ribosome"/>
    <property type="evidence" value="ECO:0007669"/>
    <property type="project" value="UniProtKB-KW"/>
</dbReference>
<dbReference type="GO" id="GO:0070181">
    <property type="term" value="F:small ribosomal subunit rRNA binding"/>
    <property type="evidence" value="ECO:0007669"/>
    <property type="project" value="TreeGrafter"/>
</dbReference>
<dbReference type="GO" id="GO:0003735">
    <property type="term" value="F:structural constituent of ribosome"/>
    <property type="evidence" value="ECO:0007669"/>
    <property type="project" value="InterPro"/>
</dbReference>
<dbReference type="GO" id="GO:0006412">
    <property type="term" value="P:translation"/>
    <property type="evidence" value="ECO:0007669"/>
    <property type="project" value="UniProtKB-UniRule"/>
</dbReference>
<dbReference type="CDD" id="cd00473">
    <property type="entry name" value="bS6"/>
    <property type="match status" value="1"/>
</dbReference>
<dbReference type="FunFam" id="3.30.70.60:FF:000002">
    <property type="entry name" value="30S ribosomal protein S6"/>
    <property type="match status" value="1"/>
</dbReference>
<dbReference type="Gene3D" id="3.30.70.60">
    <property type="match status" value="1"/>
</dbReference>
<dbReference type="HAMAP" id="MF_00360">
    <property type="entry name" value="Ribosomal_bS6"/>
    <property type="match status" value="1"/>
</dbReference>
<dbReference type="InterPro" id="IPR000529">
    <property type="entry name" value="Ribosomal_bS6"/>
</dbReference>
<dbReference type="InterPro" id="IPR035980">
    <property type="entry name" value="Ribosomal_bS6_sf"/>
</dbReference>
<dbReference type="InterPro" id="IPR020814">
    <property type="entry name" value="Ribosomal_S6_plastid/chlpt"/>
</dbReference>
<dbReference type="InterPro" id="IPR014717">
    <property type="entry name" value="Transl_elong_EF1B/ribsomal_bS6"/>
</dbReference>
<dbReference type="NCBIfam" id="TIGR00166">
    <property type="entry name" value="S6"/>
    <property type="match status" value="1"/>
</dbReference>
<dbReference type="PANTHER" id="PTHR21011">
    <property type="entry name" value="MITOCHONDRIAL 28S RIBOSOMAL PROTEIN S6"/>
    <property type="match status" value="1"/>
</dbReference>
<dbReference type="PANTHER" id="PTHR21011:SF1">
    <property type="entry name" value="SMALL RIBOSOMAL SUBUNIT PROTEIN BS6M"/>
    <property type="match status" value="1"/>
</dbReference>
<dbReference type="Pfam" id="PF01250">
    <property type="entry name" value="Ribosomal_S6"/>
    <property type="match status" value="1"/>
</dbReference>
<dbReference type="SUPFAM" id="SSF54995">
    <property type="entry name" value="Ribosomal protein S6"/>
    <property type="match status" value="1"/>
</dbReference>
<gene>
    <name evidence="1" type="primary">rpsF</name>
    <name type="ordered locus">CPR_2656</name>
</gene>
<keyword id="KW-0687">Ribonucleoprotein</keyword>
<keyword id="KW-0689">Ribosomal protein</keyword>
<keyword id="KW-0694">RNA-binding</keyword>
<keyword id="KW-0699">rRNA-binding</keyword>
<feature type="chain" id="PRO_1000005253" description="Small ribosomal subunit protein bS6">
    <location>
        <begin position="1"/>
        <end position="95"/>
    </location>
</feature>
<name>RS6_CLOPS</name>
<comment type="function">
    <text evidence="1">Binds together with bS18 to 16S ribosomal RNA.</text>
</comment>
<comment type="similarity">
    <text evidence="1">Belongs to the bacterial ribosomal protein bS6 family.</text>
</comment>
<accession>Q0SPR6</accession>
<reference key="1">
    <citation type="journal article" date="2006" name="Genome Res.">
        <title>Skewed genomic variability in strains of the toxigenic bacterial pathogen, Clostridium perfringens.</title>
        <authorList>
            <person name="Myers G.S.A."/>
            <person name="Rasko D.A."/>
            <person name="Cheung J.K."/>
            <person name="Ravel J."/>
            <person name="Seshadri R."/>
            <person name="DeBoy R.T."/>
            <person name="Ren Q."/>
            <person name="Varga J."/>
            <person name="Awad M.M."/>
            <person name="Brinkac L.M."/>
            <person name="Daugherty S.C."/>
            <person name="Haft D.H."/>
            <person name="Dodson R.J."/>
            <person name="Madupu R."/>
            <person name="Nelson W.C."/>
            <person name="Rosovitz M.J."/>
            <person name="Sullivan S.A."/>
            <person name="Khouri H."/>
            <person name="Dimitrov G.I."/>
            <person name="Watkins K.L."/>
            <person name="Mulligan S."/>
            <person name="Benton J."/>
            <person name="Radune D."/>
            <person name="Fisher D.J."/>
            <person name="Atkins H.S."/>
            <person name="Hiscox T."/>
            <person name="Jost B.H."/>
            <person name="Billington S.J."/>
            <person name="Songer J.G."/>
            <person name="McClane B.A."/>
            <person name="Titball R.W."/>
            <person name="Rood J.I."/>
            <person name="Melville S.B."/>
            <person name="Paulsen I.T."/>
        </authorList>
    </citation>
    <scope>NUCLEOTIDE SEQUENCE [LARGE SCALE GENOMIC DNA]</scope>
    <source>
        <strain>SM101 / Type A</strain>
    </source>
</reference>
<sequence length="95" mass="10898">MRKYETIFVAHPSLDEEAVKALIEKFKGVIENGNGTVDNVDFWGKRKLAYEIAKVNEGYYTLINFTANPELPKELDRVFGITDGIIRHIIVKEEQ</sequence>
<organism>
    <name type="scientific">Clostridium perfringens (strain SM101 / Type A)</name>
    <dbReference type="NCBI Taxonomy" id="289380"/>
    <lineage>
        <taxon>Bacteria</taxon>
        <taxon>Bacillati</taxon>
        <taxon>Bacillota</taxon>
        <taxon>Clostridia</taxon>
        <taxon>Eubacteriales</taxon>
        <taxon>Clostridiaceae</taxon>
        <taxon>Clostridium</taxon>
    </lineage>
</organism>
<protein>
    <recommendedName>
        <fullName evidence="1">Small ribosomal subunit protein bS6</fullName>
    </recommendedName>
    <alternativeName>
        <fullName evidence="2">30S ribosomal protein S6</fullName>
    </alternativeName>
</protein>
<evidence type="ECO:0000255" key="1">
    <source>
        <dbReference type="HAMAP-Rule" id="MF_00360"/>
    </source>
</evidence>
<evidence type="ECO:0000305" key="2"/>